<protein>
    <recommendedName>
        <fullName>Chalcone synthase 1</fullName>
        <shortName>OsCHS1</shortName>
        <ecNumber>2.3.1.74</ecNumber>
    </recommendedName>
    <alternativeName>
        <fullName>Naregenin-chalcone synthase</fullName>
    </alternativeName>
</protein>
<accession>A2ZEX7</accession>
<accession>P48405</accession>
<accession>P93710</accession>
<accession>Q9AVC2</accession>
<feature type="chain" id="PRO_0000293085" description="Chalcone synthase 1">
    <location>
        <begin position="1"/>
        <end position="398"/>
    </location>
</feature>
<feature type="active site" description="Acyl-thioester intermediate" evidence="2">
    <location>
        <position position="167"/>
    </location>
</feature>
<feature type="binding site" evidence="1">
    <location>
        <begin position="58"/>
        <end position="65"/>
    </location>
    <ligand>
        <name>CoA</name>
        <dbReference type="ChEBI" id="CHEBI:57287"/>
    </ligand>
</feature>
<feature type="binding site" evidence="1">
    <location>
        <position position="200"/>
    </location>
    <ligand>
        <name>substrate</name>
    </ligand>
</feature>
<feature type="binding site" evidence="1">
    <location>
        <begin position="219"/>
        <end position="220"/>
    </location>
    <ligand>
        <name>substrate</name>
    </ligand>
</feature>
<feature type="binding site" evidence="1">
    <location>
        <position position="311"/>
    </location>
    <ligand>
        <name>CoA</name>
        <dbReference type="ChEBI" id="CHEBI:57287"/>
    </ligand>
</feature>
<feature type="helix" evidence="4">
    <location>
        <begin position="7"/>
        <end position="14"/>
    </location>
</feature>
<feature type="strand" evidence="4">
    <location>
        <begin position="21"/>
        <end position="28"/>
    </location>
</feature>
<feature type="strand" evidence="4">
    <location>
        <begin position="33"/>
        <end position="35"/>
    </location>
</feature>
<feature type="helix" evidence="4">
    <location>
        <begin position="36"/>
        <end position="38"/>
    </location>
</feature>
<feature type="helix" evidence="4">
    <location>
        <begin position="39"/>
        <end position="46"/>
    </location>
</feature>
<feature type="helix" evidence="4">
    <location>
        <begin position="53"/>
        <end position="65"/>
    </location>
</feature>
<feature type="strand" evidence="4">
    <location>
        <begin position="70"/>
        <end position="72"/>
    </location>
</feature>
<feature type="helix" evidence="4">
    <location>
        <begin position="77"/>
        <end position="82"/>
    </location>
</feature>
<feature type="helix" evidence="4">
    <location>
        <begin position="84"/>
        <end position="86"/>
    </location>
</feature>
<feature type="strand" evidence="4">
    <location>
        <begin position="88"/>
        <end position="90"/>
    </location>
</feature>
<feature type="helix" evidence="4">
    <location>
        <begin position="94"/>
        <end position="120"/>
    </location>
</feature>
<feature type="helix" evidence="4">
    <location>
        <begin position="124"/>
        <end position="126"/>
    </location>
</feature>
<feature type="strand" evidence="4">
    <location>
        <begin position="129"/>
        <end position="136"/>
    </location>
</feature>
<feature type="helix" evidence="4">
    <location>
        <begin position="143"/>
        <end position="151"/>
    </location>
</feature>
<feature type="strand" evidence="4">
    <location>
        <begin position="158"/>
        <end position="164"/>
    </location>
</feature>
<feature type="helix" evidence="4">
    <location>
        <begin position="169"/>
        <end position="182"/>
    </location>
</feature>
<feature type="strand" evidence="4">
    <location>
        <begin position="188"/>
        <end position="195"/>
    </location>
</feature>
<feature type="helix" evidence="4">
    <location>
        <begin position="197"/>
        <end position="199"/>
    </location>
</feature>
<feature type="helix" evidence="4">
    <location>
        <begin position="209"/>
        <end position="217"/>
    </location>
</feature>
<feature type="strand" evidence="4">
    <location>
        <begin position="221"/>
        <end position="230"/>
    </location>
</feature>
<feature type="turn" evidence="4">
    <location>
        <begin position="233"/>
        <end position="235"/>
    </location>
</feature>
<feature type="strand" evidence="4">
    <location>
        <begin position="240"/>
        <end position="249"/>
    </location>
</feature>
<feature type="strand" evidence="4">
    <location>
        <begin position="256"/>
        <end position="262"/>
    </location>
</feature>
<feature type="strand" evidence="4">
    <location>
        <begin position="265"/>
        <end position="270"/>
    </location>
</feature>
<feature type="helix" evidence="4">
    <location>
        <begin position="274"/>
        <end position="290"/>
    </location>
</feature>
<feature type="helix" evidence="4">
    <location>
        <begin position="291"/>
        <end position="293"/>
    </location>
</feature>
<feature type="helix" evidence="4">
    <location>
        <begin position="298"/>
        <end position="300"/>
    </location>
</feature>
<feature type="strand" evidence="4">
    <location>
        <begin position="301"/>
        <end position="305"/>
    </location>
</feature>
<feature type="helix" evidence="4">
    <location>
        <begin position="310"/>
        <end position="320"/>
    </location>
</feature>
<feature type="helix" evidence="4">
    <location>
        <begin position="324"/>
        <end position="327"/>
    </location>
</feature>
<feature type="helix" evidence="4">
    <location>
        <begin position="328"/>
        <end position="337"/>
    </location>
</feature>
<feature type="helix" evidence="4">
    <location>
        <begin position="341"/>
        <end position="343"/>
    </location>
</feature>
<feature type="helix" evidence="4">
    <location>
        <begin position="344"/>
        <end position="358"/>
    </location>
</feature>
<feature type="turn" evidence="4">
    <location>
        <begin position="364"/>
        <end position="367"/>
    </location>
</feature>
<feature type="strand" evidence="4">
    <location>
        <begin position="369"/>
        <end position="377"/>
    </location>
</feature>
<feature type="turn" evidence="4">
    <location>
        <begin position="378"/>
        <end position="380"/>
    </location>
</feature>
<feature type="strand" evidence="4">
    <location>
        <begin position="381"/>
        <end position="389"/>
    </location>
</feature>
<sequence length="398" mass="43238">MAAAVTVEEVRRAQRAEGPATVLAIGTATPANCVYQADYPDYYFRITKSEHMVELKEKFKRMCDKSQIRKRYMHLTEEILQENPNMCAYMAPSLDARQDIVVVEVPKLGKAAAQKAIKEWGQPRSRITHLVFCTTSGVDMPGADYQLAKMLGLRPNVSRLMMYQQGCFAGGTVLRVAKDLAENNRGARVLAVCSEITAVTFRGPSESHLDSMVGQALFGDGAAAVIVGSDPDEAVERPLFQMVSASQTILPDSEGAIDGHLREVGLTFHLLKDVPGLISKNIERALGDAFTPLGISDWNSIFWVAHPGGPAILDQVEAKVGLDKERMRATRHVLSEYGNMSSACVLFILDEMRKRSAEDGHATTGEGMDWGVLFGFGPGLTVETVVLHSVPITAGAAA</sequence>
<name>CHS1_ORYSI</name>
<evidence type="ECO:0000250" key="1"/>
<evidence type="ECO:0000255" key="2">
    <source>
        <dbReference type="PROSITE-ProRule" id="PRU10023"/>
    </source>
</evidence>
<evidence type="ECO:0000305" key="3"/>
<evidence type="ECO:0007829" key="4">
    <source>
        <dbReference type="PDB" id="4YJY"/>
    </source>
</evidence>
<gene>
    <name type="primary">CHS1</name>
    <name type="synonym">CHS</name>
    <name type="ORF">OsI_035120</name>
</gene>
<dbReference type="EC" id="2.3.1.74"/>
<dbReference type="EMBL" id="X89859">
    <property type="protein sequence ID" value="CAA61955.1"/>
    <property type="molecule type" value="mRNA"/>
</dbReference>
<dbReference type="EMBL" id="CM000136">
    <property type="protein sequence ID" value="EAY81161.1"/>
    <property type="molecule type" value="Genomic_DNA"/>
</dbReference>
<dbReference type="PIR" id="S58190">
    <property type="entry name" value="S58190"/>
</dbReference>
<dbReference type="PDB" id="4YJY">
    <property type="method" value="X-ray"/>
    <property type="resolution" value="1.86 A"/>
    <property type="chains" value="A/B=1-398"/>
</dbReference>
<dbReference type="PDBsum" id="4YJY"/>
<dbReference type="SMR" id="A2ZEX7"/>
<dbReference type="STRING" id="39946.A2ZEX7"/>
<dbReference type="EnsemblPlants" id="BGIOSGA033874-TA">
    <property type="protein sequence ID" value="BGIOSGA033874-PA"/>
    <property type="gene ID" value="BGIOSGA033874"/>
</dbReference>
<dbReference type="EnsemblPlants" id="OsGoSa_11g0015710.01">
    <property type="protein sequence ID" value="OsGoSa_11g0015710.01"/>
    <property type="gene ID" value="OsGoSa_11g0015710"/>
</dbReference>
<dbReference type="EnsemblPlants" id="OsKYG_11g0016060.01">
    <property type="protein sequence ID" value="OsKYG_11g0016060.01"/>
    <property type="gene ID" value="OsKYG_11g0016060"/>
</dbReference>
<dbReference type="EnsemblPlants" id="OsLaMu_11g0015800.01">
    <property type="protein sequence ID" value="OsLaMu_11g0015800.01"/>
    <property type="gene ID" value="OsLaMu_11g0015800"/>
</dbReference>
<dbReference type="EnsemblPlants" id="OsLiXu_Ung0071490.01">
    <property type="protein sequence ID" value="OsLiXu_Ung0071490.01"/>
    <property type="gene ID" value="OsLiXu_Ung0071490"/>
</dbReference>
<dbReference type="EnsemblPlants" id="OsZS97_11G015850_01">
    <property type="protein sequence ID" value="OsZS97_11G015850_01"/>
    <property type="gene ID" value="OsZS97_11G015850"/>
</dbReference>
<dbReference type="Gramene" id="BGIOSGA033874-TA">
    <property type="protein sequence ID" value="BGIOSGA033874-PA"/>
    <property type="gene ID" value="BGIOSGA033874"/>
</dbReference>
<dbReference type="Gramene" id="OsGoSa_11g0015710.01">
    <property type="protein sequence ID" value="OsGoSa_11g0015710.01"/>
    <property type="gene ID" value="OsGoSa_11g0015710"/>
</dbReference>
<dbReference type="Gramene" id="OsKYG_11g0016060.01">
    <property type="protein sequence ID" value="OsKYG_11g0016060.01"/>
    <property type="gene ID" value="OsKYG_11g0016060"/>
</dbReference>
<dbReference type="Gramene" id="OsLaMu_11g0015800.01">
    <property type="protein sequence ID" value="OsLaMu_11g0015800.01"/>
    <property type="gene ID" value="OsLaMu_11g0015800"/>
</dbReference>
<dbReference type="Gramene" id="OsLiXu_Ung0071490.01">
    <property type="protein sequence ID" value="OsLiXu_Ung0071490.01"/>
    <property type="gene ID" value="OsLiXu_Ung0071490"/>
</dbReference>
<dbReference type="Gramene" id="OsZS97_11G015850_01">
    <property type="protein sequence ID" value="OsZS97_11G015850_01"/>
    <property type="gene ID" value="OsZS97_11G015850"/>
</dbReference>
<dbReference type="HOGENOM" id="CLU_034992_2_0_1"/>
<dbReference type="OMA" id="HGWQDRM"/>
<dbReference type="OrthoDB" id="1529441at2759"/>
<dbReference type="UniPathway" id="UPA00154"/>
<dbReference type="Proteomes" id="UP000007015">
    <property type="component" value="Chromosome 11"/>
</dbReference>
<dbReference type="GO" id="GO:0016210">
    <property type="term" value="F:naringenin-chalcone synthase activity"/>
    <property type="evidence" value="ECO:0007669"/>
    <property type="project" value="UniProtKB-EC"/>
</dbReference>
<dbReference type="GO" id="GO:0009813">
    <property type="term" value="P:flavonoid biosynthetic process"/>
    <property type="evidence" value="ECO:0007669"/>
    <property type="project" value="UniProtKB-UniPathway"/>
</dbReference>
<dbReference type="GO" id="GO:0030639">
    <property type="term" value="P:polyketide biosynthetic process"/>
    <property type="evidence" value="ECO:0007669"/>
    <property type="project" value="TreeGrafter"/>
</dbReference>
<dbReference type="CDD" id="cd00831">
    <property type="entry name" value="CHS_like"/>
    <property type="match status" value="1"/>
</dbReference>
<dbReference type="FunFam" id="3.40.47.10:FF:000014">
    <property type="entry name" value="Chalcone synthase 1"/>
    <property type="match status" value="1"/>
</dbReference>
<dbReference type="FunFam" id="3.40.47.10:FF:000025">
    <property type="entry name" value="Chalcone synthase 2"/>
    <property type="match status" value="1"/>
</dbReference>
<dbReference type="Gene3D" id="3.40.47.10">
    <property type="match status" value="2"/>
</dbReference>
<dbReference type="InterPro" id="IPR012328">
    <property type="entry name" value="Chalcone/stilbene_synt_C"/>
</dbReference>
<dbReference type="InterPro" id="IPR001099">
    <property type="entry name" value="Chalcone/stilbene_synt_N"/>
</dbReference>
<dbReference type="InterPro" id="IPR018088">
    <property type="entry name" value="Chalcone/stilbene_synthase_AS"/>
</dbReference>
<dbReference type="InterPro" id="IPR011141">
    <property type="entry name" value="Polyketide_synthase_type-III"/>
</dbReference>
<dbReference type="InterPro" id="IPR016039">
    <property type="entry name" value="Thiolase-like"/>
</dbReference>
<dbReference type="PANTHER" id="PTHR11877:SF14">
    <property type="entry name" value="CHALCONE SYNTHASE"/>
    <property type="match status" value="1"/>
</dbReference>
<dbReference type="PANTHER" id="PTHR11877">
    <property type="entry name" value="HYDROXYMETHYLGLUTARYL-COA SYNTHASE"/>
    <property type="match status" value="1"/>
</dbReference>
<dbReference type="Pfam" id="PF02797">
    <property type="entry name" value="Chal_sti_synt_C"/>
    <property type="match status" value="1"/>
</dbReference>
<dbReference type="Pfam" id="PF00195">
    <property type="entry name" value="Chal_sti_synt_N"/>
    <property type="match status" value="1"/>
</dbReference>
<dbReference type="PIRSF" id="PIRSF000451">
    <property type="entry name" value="PKS_III"/>
    <property type="match status" value="1"/>
</dbReference>
<dbReference type="SUPFAM" id="SSF53901">
    <property type="entry name" value="Thiolase-like"/>
    <property type="match status" value="2"/>
</dbReference>
<dbReference type="PROSITE" id="PS00441">
    <property type="entry name" value="CHALCONE_SYNTH"/>
    <property type="match status" value="1"/>
</dbReference>
<reference key="1">
    <citation type="online journal article" date="1995" name="Plant Gene Register">
        <title>Chalcone synthase cDNA from Oryza sativa.</title>
        <authorList>
            <person name="Scheffler B.E."/>
            <person name="Reddy A.R."/>
            <person name="Hoffmann I."/>
            <person name="Wienand U."/>
        </authorList>
        <locator>PGR95-071</locator>
    </citation>
    <scope>NUCLEOTIDE SEQUENCE [MRNA]</scope>
    <source>
        <strain>cv. Purple Puttu</strain>
        <tissue>Leaf</tissue>
    </source>
</reference>
<reference key="2">
    <citation type="journal article" date="2005" name="PLoS Biol.">
        <title>The genomes of Oryza sativa: a history of duplications.</title>
        <authorList>
            <person name="Yu J."/>
            <person name="Wang J."/>
            <person name="Lin W."/>
            <person name="Li S."/>
            <person name="Li H."/>
            <person name="Zhou J."/>
            <person name="Ni P."/>
            <person name="Dong W."/>
            <person name="Hu S."/>
            <person name="Zeng C."/>
            <person name="Zhang J."/>
            <person name="Zhang Y."/>
            <person name="Li R."/>
            <person name="Xu Z."/>
            <person name="Li S."/>
            <person name="Li X."/>
            <person name="Zheng H."/>
            <person name="Cong L."/>
            <person name="Lin L."/>
            <person name="Yin J."/>
            <person name="Geng J."/>
            <person name="Li G."/>
            <person name="Shi J."/>
            <person name="Liu J."/>
            <person name="Lv H."/>
            <person name="Li J."/>
            <person name="Wang J."/>
            <person name="Deng Y."/>
            <person name="Ran L."/>
            <person name="Shi X."/>
            <person name="Wang X."/>
            <person name="Wu Q."/>
            <person name="Li C."/>
            <person name="Ren X."/>
            <person name="Wang J."/>
            <person name="Wang X."/>
            <person name="Li D."/>
            <person name="Liu D."/>
            <person name="Zhang X."/>
            <person name="Ji Z."/>
            <person name="Zhao W."/>
            <person name="Sun Y."/>
            <person name="Zhang Z."/>
            <person name="Bao J."/>
            <person name="Han Y."/>
            <person name="Dong L."/>
            <person name="Ji J."/>
            <person name="Chen P."/>
            <person name="Wu S."/>
            <person name="Liu J."/>
            <person name="Xiao Y."/>
            <person name="Bu D."/>
            <person name="Tan J."/>
            <person name="Yang L."/>
            <person name="Ye C."/>
            <person name="Zhang J."/>
            <person name="Xu J."/>
            <person name="Zhou Y."/>
            <person name="Yu Y."/>
            <person name="Zhang B."/>
            <person name="Zhuang S."/>
            <person name="Wei H."/>
            <person name="Liu B."/>
            <person name="Lei M."/>
            <person name="Yu H."/>
            <person name="Li Y."/>
            <person name="Xu H."/>
            <person name="Wei S."/>
            <person name="He X."/>
            <person name="Fang L."/>
            <person name="Zhang Z."/>
            <person name="Zhang Y."/>
            <person name="Huang X."/>
            <person name="Su Z."/>
            <person name="Tong W."/>
            <person name="Li J."/>
            <person name="Tong Z."/>
            <person name="Li S."/>
            <person name="Ye J."/>
            <person name="Wang L."/>
            <person name="Fang L."/>
            <person name="Lei T."/>
            <person name="Chen C.-S."/>
            <person name="Chen H.-C."/>
            <person name="Xu Z."/>
            <person name="Li H."/>
            <person name="Huang H."/>
            <person name="Zhang F."/>
            <person name="Xu H."/>
            <person name="Li N."/>
            <person name="Zhao C."/>
            <person name="Li S."/>
            <person name="Dong L."/>
            <person name="Huang Y."/>
            <person name="Li L."/>
            <person name="Xi Y."/>
            <person name="Qi Q."/>
            <person name="Li W."/>
            <person name="Zhang B."/>
            <person name="Hu W."/>
            <person name="Zhang Y."/>
            <person name="Tian X."/>
            <person name="Jiao Y."/>
            <person name="Liang X."/>
            <person name="Jin J."/>
            <person name="Gao L."/>
            <person name="Zheng W."/>
            <person name="Hao B."/>
            <person name="Liu S.-M."/>
            <person name="Wang W."/>
            <person name="Yuan L."/>
            <person name="Cao M."/>
            <person name="McDermott J."/>
            <person name="Samudrala R."/>
            <person name="Wang J."/>
            <person name="Wong G.K.-S."/>
            <person name="Yang H."/>
        </authorList>
    </citation>
    <scope>NUCLEOTIDE SEQUENCE [LARGE SCALE GENOMIC DNA]</scope>
    <source>
        <strain>cv. 93-11</strain>
    </source>
</reference>
<organism>
    <name type="scientific">Oryza sativa subsp. indica</name>
    <name type="common">Rice</name>
    <dbReference type="NCBI Taxonomy" id="39946"/>
    <lineage>
        <taxon>Eukaryota</taxon>
        <taxon>Viridiplantae</taxon>
        <taxon>Streptophyta</taxon>
        <taxon>Embryophyta</taxon>
        <taxon>Tracheophyta</taxon>
        <taxon>Spermatophyta</taxon>
        <taxon>Magnoliopsida</taxon>
        <taxon>Liliopsida</taxon>
        <taxon>Poales</taxon>
        <taxon>Poaceae</taxon>
        <taxon>BOP clade</taxon>
        <taxon>Oryzoideae</taxon>
        <taxon>Oryzeae</taxon>
        <taxon>Oryzinae</taxon>
        <taxon>Oryza</taxon>
        <taxon>Oryza sativa</taxon>
    </lineage>
</organism>
<proteinExistence type="evidence at protein level"/>
<comment type="function">
    <text>The primary product of this enzyme is 4,2',4',6'-tetrahydroxychalcone (also termed naringenin-chalcone or chalcone) which can under specific conditions spontaneously isomerize into naringenin.</text>
</comment>
<comment type="catalytic activity">
    <reaction evidence="2">
        <text>(E)-4-coumaroyl-CoA + 3 malonyl-CoA + 3 H(+) = 2',4,4',6'-tetrahydroxychalcone + 3 CO2 + 4 CoA</text>
        <dbReference type="Rhea" id="RHEA:11128"/>
        <dbReference type="ChEBI" id="CHEBI:15378"/>
        <dbReference type="ChEBI" id="CHEBI:15413"/>
        <dbReference type="ChEBI" id="CHEBI:16526"/>
        <dbReference type="ChEBI" id="CHEBI:57287"/>
        <dbReference type="ChEBI" id="CHEBI:57384"/>
        <dbReference type="ChEBI" id="CHEBI:85008"/>
        <dbReference type="EC" id="2.3.1.74"/>
    </reaction>
</comment>
<comment type="pathway">
    <text>Secondary metabolite biosynthesis; flavonoid biosynthesis.</text>
</comment>
<comment type="subunit">
    <text evidence="1">Homodimer.</text>
</comment>
<comment type="similarity">
    <text evidence="3">Belongs to the thiolase-like superfamily. Chalcone/stilbene synthases family.</text>
</comment>
<keyword id="KW-0002">3D-structure</keyword>
<keyword id="KW-0012">Acyltransferase</keyword>
<keyword id="KW-0284">Flavonoid biosynthesis</keyword>
<keyword id="KW-1185">Reference proteome</keyword>
<keyword id="KW-0808">Transferase</keyword>